<keyword id="KW-0210">Decarboxylase</keyword>
<keyword id="KW-0456">Lyase</keyword>
<keyword id="KW-0620">Polyamine biosynthesis</keyword>
<keyword id="KW-0663">Pyridoxal phosphate</keyword>
<protein>
    <recommendedName>
        <fullName>Ornithine decarboxylase</fullName>
        <shortName>ODC</shortName>
        <ecNumber>4.1.1.17</ecNumber>
    </recommendedName>
</protein>
<proteinExistence type="evidence at protein level"/>
<organism>
    <name type="scientific">Leishmania donovani</name>
    <dbReference type="NCBI Taxonomy" id="5661"/>
    <lineage>
        <taxon>Eukaryota</taxon>
        <taxon>Discoba</taxon>
        <taxon>Euglenozoa</taxon>
        <taxon>Kinetoplastea</taxon>
        <taxon>Metakinetoplastina</taxon>
        <taxon>Trypanosomatida</taxon>
        <taxon>Trypanosomatidae</taxon>
        <taxon>Leishmaniinae</taxon>
        <taxon>Leishmania</taxon>
    </lineage>
</organism>
<accession>P27116</accession>
<sequence>MGDHDVALCHVSRYNHANYWAFVPLPTVSDDTGCDSLHHDSASERIRMAPPASASKAGAAEERLHPYERRLLDQYQIHLQPANRNPLSRADSAAGREETAQTPAQVQMVPVVAVADSTSDQHASVASSQDLVDLFFLEGSQAVDGLCFSPYPIYGWRTAEERRAAVCEVFKTYNVVTRLPASPAALAAAQRRYSRHRHSAIAPINKSAIETREQYWRRLSNLYTQKGVKDAASAADAAATTATNGAVPAAPAYEPEDPFYIIDLGRVVEQMARWRHELPMVRPYFAVKSNPQPAVLEVLSALGAGFDCASKEEIHMVLGRQLVASPDDIIFANPCKQLGDLREAQACGVTYVTVDNPLEMEKISRLMPSAHAIIRIKTNDSKAQCSFSTKFGAPLEDVEGLLEAARQFNVTVCGVSFHVGSGNDDQSAYVSAVRDAYQVFQQAVQYGFKCTILDIGGGFPGTEVVEGSGNTSFEAIARTIRPVLAELFGGGDVTIISEPGRYFTAASHALLMNVFASRTLRLSDVEVSRQAFQSVVSMDEPEEYQYYVNDGLYHSFNCILFDHAHPTLLLLNDGDGADGVESGTEAAAVCSEEEGETSLSGPLANDPLFMSAWDRRRSFARRPLRITTIFGPTCDSMDCILKKQPFPEMKLGDWLLVPDMGSYTTAAAGFFNGFATRRLEWVSSVDLCARPRPVYTREGNTLRCVSE</sequence>
<comment type="function">
    <text evidence="5 7">Catalyzes the first and rate-limiting step of polyamine biosynthesis that converts ornithine into putrescine, which is the precursor for the polyamines, spermidine and spermine. Polyamines are essential for cell proliferation and are implicated in cellular processes, ranging from DNA replication to apoptosis.</text>
</comment>
<comment type="catalytic activity">
    <reaction evidence="7">
        <text>L-ornithine + H(+) = putrescine + CO2</text>
        <dbReference type="Rhea" id="RHEA:22964"/>
        <dbReference type="ChEBI" id="CHEBI:15378"/>
        <dbReference type="ChEBI" id="CHEBI:16526"/>
        <dbReference type="ChEBI" id="CHEBI:46911"/>
        <dbReference type="ChEBI" id="CHEBI:326268"/>
        <dbReference type="EC" id="4.1.1.17"/>
    </reaction>
</comment>
<comment type="cofactor">
    <cofactor evidence="3">
        <name>pyridoxal 5'-phosphate</name>
        <dbReference type="ChEBI" id="CHEBI:597326"/>
    </cofactor>
</comment>
<comment type="activity regulation">
    <text evidence="3 5 6">Inhibited by antizyme (AZ) in response to polyamine levels. AZ inhibits the assembly of the functional homodimer by binding to ODC monomers and targeting them for ubiquitin-independent proteolytic destruction by the 26S proteasome (By similarity). Inhibited by 1-amino-oxy-3-aminopropane (APA, an isosteric analog of putrescine) (PubMed:17407445). Irreversibly inhibited by alpha-difluoromethylornithine (DFMO, a curative agent of West African sleeping sickness) (PubMed:17407445, PubMed:3098971).</text>
</comment>
<comment type="biophysicochemical properties">
    <kinetics>
        <KM evidence="5">0.39 mM for L-ornithine</KM>
        <text evidence="5">kcat is 8.1 sec(-1) with L-ornithine as substrate.</text>
    </kinetics>
</comment>
<comment type="pathway">
    <text>Amine and polyamine biosynthesis; putrescine biosynthesis via L-ornithine pathway; putrescine from L-ornithine: step 1/1.</text>
</comment>
<comment type="subunit">
    <text evidence="7">Homodimer. Only the dimer is catalytically active, as the active sites are constructed of residues from both monomers.</text>
</comment>
<comment type="similarity">
    <text evidence="8">Belongs to the Orn/Lys/Arg decarboxylase class-II family.</text>
</comment>
<dbReference type="EC" id="4.1.1.17"/>
<dbReference type="EMBL" id="M81192">
    <property type="protein sequence ID" value="AAA29259.1"/>
    <property type="molecule type" value="Genomic_DNA"/>
</dbReference>
<dbReference type="PIR" id="A42322">
    <property type="entry name" value="A42322"/>
</dbReference>
<dbReference type="SMR" id="P27116"/>
<dbReference type="ChEMBL" id="CHEMBL6192"/>
<dbReference type="VEuPathDB" id="TriTrypDB:LdBPK_120105.1"/>
<dbReference type="VEuPathDB" id="TriTrypDB:LdCL_120007900"/>
<dbReference type="VEuPathDB" id="TriTrypDB:LDHU3_12.0390"/>
<dbReference type="BRENDA" id="4.1.1.17">
    <property type="organism ID" value="2947"/>
</dbReference>
<dbReference type="SABIO-RK" id="P27116"/>
<dbReference type="UniPathway" id="UPA00535">
    <property type="reaction ID" value="UER00288"/>
</dbReference>
<dbReference type="GO" id="GO:0005737">
    <property type="term" value="C:cytoplasm"/>
    <property type="evidence" value="ECO:0007669"/>
    <property type="project" value="TreeGrafter"/>
</dbReference>
<dbReference type="GO" id="GO:0004586">
    <property type="term" value="F:ornithine decarboxylase activity"/>
    <property type="evidence" value="ECO:0007669"/>
    <property type="project" value="UniProtKB-EC"/>
</dbReference>
<dbReference type="GO" id="GO:0033387">
    <property type="term" value="P:putrescine biosynthetic process from arginine, via ornithine"/>
    <property type="evidence" value="ECO:0007669"/>
    <property type="project" value="UniProtKB-UniPathway"/>
</dbReference>
<dbReference type="CDD" id="cd00622">
    <property type="entry name" value="PLPDE_III_ODC"/>
    <property type="match status" value="1"/>
</dbReference>
<dbReference type="FunFam" id="3.20.20.10:FF:000005">
    <property type="entry name" value="Ornithine decarboxylase"/>
    <property type="match status" value="1"/>
</dbReference>
<dbReference type="Gene3D" id="3.20.20.10">
    <property type="entry name" value="Alanine racemase"/>
    <property type="match status" value="1"/>
</dbReference>
<dbReference type="Gene3D" id="2.40.37.10">
    <property type="entry name" value="Lyase, Ornithine Decarboxylase, Chain A, domain 1"/>
    <property type="match status" value="1"/>
</dbReference>
<dbReference type="InterPro" id="IPR009006">
    <property type="entry name" value="Ala_racemase/Decarboxylase_C"/>
</dbReference>
<dbReference type="InterPro" id="IPR022643">
    <property type="entry name" value="De-COase2_C"/>
</dbReference>
<dbReference type="InterPro" id="IPR022657">
    <property type="entry name" value="De-COase2_CS"/>
</dbReference>
<dbReference type="InterPro" id="IPR022644">
    <property type="entry name" value="De-COase2_N"/>
</dbReference>
<dbReference type="InterPro" id="IPR022653">
    <property type="entry name" value="De-COase2_pyr-phos_BS"/>
</dbReference>
<dbReference type="InterPro" id="IPR000183">
    <property type="entry name" value="Orn/DAP/Arg_de-COase"/>
</dbReference>
<dbReference type="InterPro" id="IPR002433">
    <property type="entry name" value="Orn_de-COase"/>
</dbReference>
<dbReference type="InterPro" id="IPR029066">
    <property type="entry name" value="PLP-binding_barrel"/>
</dbReference>
<dbReference type="PANTHER" id="PTHR11482">
    <property type="entry name" value="ARGININE/DIAMINOPIMELATE/ORNITHINE DECARBOXYLASE"/>
    <property type="match status" value="1"/>
</dbReference>
<dbReference type="PANTHER" id="PTHR11482:SF6">
    <property type="entry name" value="ORNITHINE DECARBOXYLASE 1-RELATED"/>
    <property type="match status" value="1"/>
</dbReference>
<dbReference type="Pfam" id="PF02784">
    <property type="entry name" value="Orn_Arg_deC_N"/>
    <property type="match status" value="1"/>
</dbReference>
<dbReference type="Pfam" id="PF00278">
    <property type="entry name" value="Orn_DAP_Arg_deC"/>
    <property type="match status" value="1"/>
</dbReference>
<dbReference type="PRINTS" id="PR01179">
    <property type="entry name" value="ODADCRBXLASE"/>
</dbReference>
<dbReference type="PRINTS" id="PR01182">
    <property type="entry name" value="ORNDCRBXLASE"/>
</dbReference>
<dbReference type="SUPFAM" id="SSF50621">
    <property type="entry name" value="Alanine racemase C-terminal domain-like"/>
    <property type="match status" value="1"/>
</dbReference>
<dbReference type="SUPFAM" id="SSF51419">
    <property type="entry name" value="PLP-binding barrel"/>
    <property type="match status" value="1"/>
</dbReference>
<dbReference type="PROSITE" id="PS00878">
    <property type="entry name" value="ODR_DC_2_1"/>
    <property type="match status" value="1"/>
</dbReference>
<dbReference type="PROSITE" id="PS00879">
    <property type="entry name" value="ODR_DC_2_2"/>
    <property type="match status" value="1"/>
</dbReference>
<evidence type="ECO:0000250" key="1">
    <source>
        <dbReference type="UniProtKB" id="P00860"/>
    </source>
</evidence>
<evidence type="ECO:0000250" key="2">
    <source>
        <dbReference type="UniProtKB" id="P07805"/>
    </source>
</evidence>
<evidence type="ECO:0000250" key="3">
    <source>
        <dbReference type="UniProtKB" id="P11926"/>
    </source>
</evidence>
<evidence type="ECO:0000256" key="4">
    <source>
        <dbReference type="SAM" id="MobiDB-lite"/>
    </source>
</evidence>
<evidence type="ECO:0000269" key="5">
    <source>
    </source>
</evidence>
<evidence type="ECO:0000269" key="6">
    <source>
    </source>
</evidence>
<evidence type="ECO:0000269" key="7">
    <source>
    </source>
</evidence>
<evidence type="ECO:0000305" key="8"/>
<name>DCOR_LEIDO</name>
<reference key="1">
    <citation type="journal article" date="1992" name="J. Biol. Chem.">
        <title>Amplification and molecular cloning of the ornithine decarboxylase gene of Leishmania donovani.</title>
        <authorList>
            <person name="Hanson S.S."/>
            <person name="Adelman J."/>
            <person name="Ullman B."/>
        </authorList>
    </citation>
    <scope>NUCLEOTIDE SEQUENCE [GENOMIC DNA]</scope>
</reference>
<reference key="2">
    <citation type="journal article" date="1986" name="J. Protozool.">
        <title>Effects of DL-alpha-difluoromethylornithine on Leishmania donovani promastigotes.</title>
        <authorList>
            <person name="Kaur K."/>
            <person name="Emmett K."/>
            <person name="McCann P.P."/>
            <person name="Sjoerdsma A."/>
            <person name="Ullman B."/>
        </authorList>
    </citation>
    <scope>ACTIVITY REGULATION</scope>
</reference>
<reference key="3">
    <citation type="journal article" date="1994" name="Biochemistry">
        <title>Formation of functional cross-species heterodimers of ornithine decarboxylase.</title>
        <authorList>
            <person name="Osterman A."/>
            <person name="Grishin N.V."/>
            <person name="Kinch L.N."/>
            <person name="Phillips M.A."/>
        </authorList>
    </citation>
    <scope>FUNCTION</scope>
    <scope>CATALYTIC ACTIVITY</scope>
    <scope>SUBUNIT</scope>
</reference>
<reference key="4">
    <citation type="journal article" date="2007" name="Biochem. J.">
        <title>A structural insight into the inhibition of human and Leishmania donovani ornithine decarboxylases by 1-amino-oxy-3-aminopropane.</title>
        <authorList>
            <person name="Dufe V.T."/>
            <person name="Ingner D."/>
            <person name="Heby O."/>
            <person name="Khomutov A.R."/>
            <person name="Persson L."/>
            <person name="Al-Karadaghi S."/>
        </authorList>
    </citation>
    <scope>FUNCTION</scope>
    <scope>BIOPHYSICOCHEMICAL PROPERTIES</scope>
</reference>
<feature type="chain" id="PRO_0000149901" description="Ornithine decarboxylase">
    <location>
        <begin position="1"/>
        <end position="707"/>
    </location>
</feature>
<feature type="region of interest" description="Disordered" evidence="4">
    <location>
        <begin position="83"/>
        <end position="102"/>
    </location>
</feature>
<feature type="active site" description="Proton donor; shared with dimeric partner" evidence="3">
    <location>
        <position position="634"/>
    </location>
</feature>
<feature type="binding site" evidence="3">
    <location>
        <position position="421"/>
    </location>
    <ligand>
        <name>pyridoxal 5'-phosphate</name>
        <dbReference type="ChEBI" id="CHEBI:597326"/>
    </ligand>
</feature>
<feature type="binding site" evidence="3">
    <location>
        <position position="458"/>
    </location>
    <ligand>
        <name>pyridoxal 5'-phosphate</name>
        <dbReference type="ChEBI" id="CHEBI:597326"/>
    </ligand>
</feature>
<feature type="binding site" evidence="3">
    <location>
        <begin position="498"/>
        <end position="501"/>
    </location>
    <ligand>
        <name>pyridoxal 5'-phosphate</name>
        <dbReference type="ChEBI" id="CHEBI:597326"/>
    </ligand>
</feature>
<feature type="binding site" description="in other chain" evidence="2">
    <location>
        <begin position="561"/>
        <end position="562"/>
    </location>
    <ligand>
        <name>substrate</name>
        <note>ligand shared between dimeric partners</note>
    </ligand>
</feature>
<feature type="binding site" evidence="2">
    <location>
        <position position="635"/>
    </location>
    <ligand>
        <name>substrate</name>
        <note>ligand shared between dimeric partners</note>
    </ligand>
</feature>
<feature type="binding site" evidence="3">
    <location>
        <position position="663"/>
    </location>
    <ligand>
        <name>pyridoxal 5'-phosphate</name>
        <dbReference type="ChEBI" id="CHEBI:597326"/>
    </ligand>
</feature>
<feature type="site" description="Stacks against the aromatic ring of pyridoxal phosphate and stabilizes reaction intermediates" evidence="1">
    <location>
        <position position="418"/>
    </location>
</feature>
<feature type="modified residue" description="N6-(pyridoxal phosphate)lysine" evidence="3">
    <location>
        <position position="288"/>
    </location>
</feature>